<name>MERC_SHIFL</name>
<geneLocation type="plasmid">
    <name>IncFII R100</name>
    <name>NR1</name>
</geneLocation>
<accession>Q50919</accession>
<sequence length="140" mass="14964">MGLMTRIADKTGALGSVVSAMGCAACFPALASFGAAIGLGFLSQYEGLFISRLLPLFAALAFLANALGWFSHRQWLRSLLGMIGPAIVFAATVWLLGNWWTANLMYVGLALMIGVSIWDFVSPAHRRCGPDGCELPAKRL</sequence>
<protein>
    <recommendedName>
        <fullName evidence="5">Mercuric transport protein MerC</fullName>
    </recommendedName>
    <alternativeName>
        <fullName evidence="5">Mercuric resistance protein MerC</fullName>
    </alternativeName>
</protein>
<dbReference type="EMBL" id="K03089">
    <property type="protein sequence ID" value="AAB59077.1"/>
    <property type="molecule type" value="Genomic_DNA"/>
</dbReference>
<dbReference type="RefSeq" id="WP_001340589.1">
    <property type="nucleotide sequence ID" value="NZ_WPET01000167.1"/>
</dbReference>
<dbReference type="GeneID" id="75170383"/>
<dbReference type="GO" id="GO:0005886">
    <property type="term" value="C:plasma membrane"/>
    <property type="evidence" value="ECO:0007669"/>
    <property type="project" value="UniProtKB-SubCell"/>
</dbReference>
<dbReference type="GO" id="GO:0015097">
    <property type="term" value="F:mercury ion transmembrane transporter activity"/>
    <property type="evidence" value="ECO:0007669"/>
    <property type="project" value="InterPro"/>
</dbReference>
<dbReference type="GO" id="GO:0046872">
    <property type="term" value="F:metal ion binding"/>
    <property type="evidence" value="ECO:0007669"/>
    <property type="project" value="UniProtKB-KW"/>
</dbReference>
<dbReference type="InterPro" id="IPR004891">
    <property type="entry name" value="Mercury-R_MerC"/>
</dbReference>
<dbReference type="NCBIfam" id="NF010318">
    <property type="entry name" value="PRK13755.1"/>
    <property type="match status" value="1"/>
</dbReference>
<dbReference type="NCBIfam" id="NF033784">
    <property type="entry name" value="transport_merC"/>
    <property type="match status" value="1"/>
</dbReference>
<dbReference type="Pfam" id="PF03203">
    <property type="entry name" value="MerC"/>
    <property type="match status" value="1"/>
</dbReference>
<reference key="1">
    <citation type="journal article" date="1984" name="J. Mol. Appl. Genet.">
        <title>The DNA sequence of the mercury resistance operon of the IncFII plasmid NR1.</title>
        <authorList>
            <person name="Barrineau P."/>
            <person name="Gilbert P."/>
            <person name="Jackson W.J."/>
            <person name="Jones C.S."/>
            <person name="Summers A.O."/>
            <person name="Wisdom S."/>
        </authorList>
    </citation>
    <scope>NUCLEOTIDE SEQUENCE [GENOMIC DNA]</scope>
    <source>
        <transposon>Tn21</transposon>
    </source>
</reference>
<reference key="2">
    <citation type="journal article" date="1997" name="J. Biol. Chem.">
        <title>A mercuric ion uptake role for the integral inner membrane protein, MerC, involved in bacterial mercuric ion resistance.</title>
        <authorList>
            <person name="Sahlman L."/>
            <person name="Wong W."/>
            <person name="Powlowski J."/>
        </authorList>
    </citation>
    <scope>PROTEIN SEQUENCE OF 2-6</scope>
    <scope>FUNCTION</scope>
    <scope>ACTIVITY REGULATION</scope>
    <scope>SUBCELLULAR LOCATION</scope>
    <scope>HG(2+)-BINDING</scope>
</reference>
<reference key="3">
    <citation type="journal article" date="1992" name="J. Bacteriol.">
        <title>Roles of the Tn21 merT, merP, and merC gene products in mercury resistance and mercury binding.</title>
        <authorList>
            <person name="Hamlett N.V."/>
            <person name="Landale E.C."/>
            <person name="Davis B.H."/>
            <person name="Summers A.O."/>
        </authorList>
    </citation>
    <scope>DISRUPTION PHENOTYPE</scope>
</reference>
<evidence type="ECO:0000255" key="1"/>
<evidence type="ECO:0000269" key="2">
    <source>
    </source>
</evidence>
<evidence type="ECO:0000269" key="3">
    <source>
    </source>
</evidence>
<evidence type="ECO:0000303" key="4">
    <source>
    </source>
</evidence>
<evidence type="ECO:0000305" key="5"/>
<evidence type="ECO:0000305" key="6">
    <source>
    </source>
</evidence>
<proteinExistence type="evidence at protein level"/>
<keyword id="KW-0997">Cell inner membrane</keyword>
<keyword id="KW-1003">Cell membrane</keyword>
<keyword id="KW-0903">Direct protein sequencing</keyword>
<keyword id="KW-0472">Membrane</keyword>
<keyword id="KW-0475">Mercuric resistance</keyword>
<keyword id="KW-0476">Mercury</keyword>
<keyword id="KW-0479">Metal-binding</keyword>
<keyword id="KW-0614">Plasmid</keyword>
<keyword id="KW-0812">Transmembrane</keyword>
<keyword id="KW-1133">Transmembrane helix</keyword>
<keyword id="KW-0813">Transport</keyword>
<organism>
    <name type="scientific">Shigella flexneri</name>
    <dbReference type="NCBI Taxonomy" id="623"/>
    <lineage>
        <taxon>Bacteria</taxon>
        <taxon>Pseudomonadati</taxon>
        <taxon>Pseudomonadota</taxon>
        <taxon>Gammaproteobacteria</taxon>
        <taxon>Enterobacterales</taxon>
        <taxon>Enterobacteriaceae</taxon>
        <taxon>Shigella</taxon>
    </lineage>
</organism>
<comment type="function">
    <text evidence="3">Involved in mercuric ion uptake and binding. MerC-mediated Hg(2+) uptake does not require MerP.</text>
</comment>
<comment type="activity regulation">
    <text evidence="3">Uptake of Hg(2+) is decreased by iodoacetamide and iodoacetate, and is completely inhibited by the thiol-modifying reagent N-ethylmaleimide (NEM).</text>
</comment>
<comment type="subcellular location">
    <subcellularLocation>
        <location evidence="3">Cell inner membrane</location>
        <topology evidence="1">Multi-pass membrane protein</topology>
    </subcellularLocation>
</comment>
<comment type="disruption phenotype">
    <text evidence="2">Mutation does not affect resistance to mercury.</text>
</comment>
<gene>
    <name evidence="4" type="primary">merC</name>
</gene>
<feature type="initiator methionine" description="Removed" evidence="3">
    <location>
        <position position="1"/>
    </location>
</feature>
<feature type="chain" id="PRO_0000442699" description="Mercuric transport protein MerC">
    <location>
        <begin position="2"/>
        <end position="140"/>
    </location>
</feature>
<feature type="topological domain" description="Cytoplasmic" evidence="6">
    <location>
        <begin position="2"/>
        <end position="10"/>
    </location>
</feature>
<feature type="transmembrane region" description="Helical" evidence="1">
    <location>
        <begin position="11"/>
        <end position="31"/>
    </location>
</feature>
<feature type="topological domain" description="Periplasmic" evidence="6">
    <location>
        <begin position="32"/>
        <end position="46"/>
    </location>
</feature>
<feature type="transmembrane region" description="Helical" evidence="1">
    <location>
        <begin position="47"/>
        <end position="67"/>
    </location>
</feature>
<feature type="topological domain" description="Cytoplasmic" evidence="6">
    <location>
        <begin position="68"/>
        <end position="78"/>
    </location>
</feature>
<feature type="transmembrane region" description="Helical" evidence="1">
    <location>
        <begin position="79"/>
        <end position="99"/>
    </location>
</feature>
<feature type="topological domain" description="Periplasmic" evidence="6">
    <location>
        <begin position="100"/>
        <end position="106"/>
    </location>
</feature>
<feature type="transmembrane region" description="Helical" evidence="1">
    <location>
        <begin position="107"/>
        <end position="127"/>
    </location>
</feature>
<feature type="topological domain" description="Cytoplasmic" evidence="6">
    <location>
        <begin position="128"/>
        <end position="140"/>
    </location>
</feature>
<feature type="binding site" evidence="6">
    <location>
        <position position="22"/>
    </location>
    <ligand>
        <name>Hg(2+)</name>
        <dbReference type="ChEBI" id="CHEBI:16793"/>
    </ligand>
</feature>
<feature type="binding site" evidence="6">
    <location>
        <position position="25"/>
    </location>
    <ligand>
        <name>Hg(2+)</name>
        <dbReference type="ChEBI" id="CHEBI:16793"/>
    </ligand>
</feature>